<protein>
    <recommendedName>
        <fullName evidence="1">Riboflavin biosynthesis protein RibBA</fullName>
    </recommendedName>
    <domain>
        <recommendedName>
            <fullName evidence="1">3,4-dihydroxy-2-butanone 4-phosphate synthase</fullName>
            <shortName evidence="1">DHBP synthase</shortName>
            <ecNumber evidence="1">4.1.99.12</ecNumber>
        </recommendedName>
    </domain>
    <domain>
        <recommendedName>
            <fullName evidence="1">GTP cyclohydrolase-2</fullName>
            <ecNumber evidence="1">3.5.4.25</ecNumber>
        </recommendedName>
        <alternativeName>
            <fullName evidence="1">GTP cyclohydrolase II</fullName>
        </alternativeName>
    </domain>
</protein>
<feature type="chain" id="PRO_0000151739" description="Riboflavin biosynthesis protein RibBA">
    <location>
        <begin position="1"/>
        <end position="393"/>
    </location>
</feature>
<feature type="region of interest" description="DHBP synthase">
    <location>
        <begin position="1"/>
        <end position="200"/>
    </location>
</feature>
<feature type="region of interest" description="GTP cyclohydrolase II">
    <location>
        <begin position="201"/>
        <end position="393"/>
    </location>
</feature>
<feature type="active site" description="Proton acceptor; for GTP cyclohydrolase activity" evidence="1">
    <location>
        <position position="325"/>
    </location>
</feature>
<feature type="active site" description="Nucleophile; for GTP cyclohydrolase activity" evidence="1">
    <location>
        <position position="327"/>
    </location>
</feature>
<feature type="binding site" evidence="1">
    <location>
        <begin position="27"/>
        <end position="28"/>
    </location>
    <ligand>
        <name>D-ribulose 5-phosphate</name>
        <dbReference type="ChEBI" id="CHEBI:58121"/>
    </ligand>
</feature>
<feature type="binding site" evidence="1">
    <location>
        <position position="28"/>
    </location>
    <ligand>
        <name>Mg(2+)</name>
        <dbReference type="ChEBI" id="CHEBI:18420"/>
        <label>1</label>
    </ligand>
</feature>
<feature type="binding site" evidence="1">
    <location>
        <position position="28"/>
    </location>
    <ligand>
        <name>Mg(2+)</name>
        <dbReference type="ChEBI" id="CHEBI:18420"/>
        <label>2</label>
    </ligand>
</feature>
<feature type="binding site" evidence="1">
    <location>
        <position position="32"/>
    </location>
    <ligand>
        <name>D-ribulose 5-phosphate</name>
        <dbReference type="ChEBI" id="CHEBI:58121"/>
    </ligand>
</feature>
<feature type="binding site" evidence="1">
    <location>
        <begin position="139"/>
        <end position="143"/>
    </location>
    <ligand>
        <name>D-ribulose 5-phosphate</name>
        <dbReference type="ChEBI" id="CHEBI:58121"/>
    </ligand>
</feature>
<feature type="binding site" evidence="1">
    <location>
        <position position="142"/>
    </location>
    <ligand>
        <name>Mg(2+)</name>
        <dbReference type="ChEBI" id="CHEBI:18420"/>
        <label>2</label>
    </ligand>
</feature>
<feature type="binding site" evidence="1">
    <location>
        <position position="163"/>
    </location>
    <ligand>
        <name>D-ribulose 5-phosphate</name>
        <dbReference type="ChEBI" id="CHEBI:58121"/>
    </ligand>
</feature>
<feature type="binding site" evidence="1">
    <location>
        <begin position="249"/>
        <end position="253"/>
    </location>
    <ligand>
        <name>GTP</name>
        <dbReference type="ChEBI" id="CHEBI:37565"/>
    </ligand>
</feature>
<feature type="binding site" evidence="1">
    <location>
        <position position="254"/>
    </location>
    <ligand>
        <name>Zn(2+)</name>
        <dbReference type="ChEBI" id="CHEBI:29105"/>
        <note>catalytic</note>
    </ligand>
</feature>
<feature type="binding site" evidence="1">
    <location>
        <position position="265"/>
    </location>
    <ligand>
        <name>Zn(2+)</name>
        <dbReference type="ChEBI" id="CHEBI:29105"/>
        <note>catalytic</note>
    </ligand>
</feature>
<feature type="binding site" evidence="1">
    <location>
        <position position="267"/>
    </location>
    <ligand>
        <name>Zn(2+)</name>
        <dbReference type="ChEBI" id="CHEBI:29105"/>
        <note>catalytic</note>
    </ligand>
</feature>
<feature type="binding site" evidence="1">
    <location>
        <position position="270"/>
    </location>
    <ligand>
        <name>GTP</name>
        <dbReference type="ChEBI" id="CHEBI:37565"/>
    </ligand>
</feature>
<feature type="binding site" evidence="1">
    <location>
        <begin position="291"/>
        <end position="293"/>
    </location>
    <ligand>
        <name>GTP</name>
        <dbReference type="ChEBI" id="CHEBI:37565"/>
    </ligand>
</feature>
<feature type="binding site" evidence="1">
    <location>
        <position position="313"/>
    </location>
    <ligand>
        <name>GTP</name>
        <dbReference type="ChEBI" id="CHEBI:37565"/>
    </ligand>
</feature>
<feature type="binding site" evidence="1">
    <location>
        <position position="348"/>
    </location>
    <ligand>
        <name>GTP</name>
        <dbReference type="ChEBI" id="CHEBI:37565"/>
    </ligand>
</feature>
<feature type="binding site" evidence="1">
    <location>
        <position position="353"/>
    </location>
    <ligand>
        <name>GTP</name>
        <dbReference type="ChEBI" id="CHEBI:37565"/>
    </ligand>
</feature>
<feature type="site" description="Essential for DHBP synthase activity" evidence="1">
    <location>
        <position position="125"/>
    </location>
</feature>
<feature type="site" description="Essential for DHBP synthase activity" evidence="1">
    <location>
        <position position="163"/>
    </location>
</feature>
<name>RIBBA_STAES</name>
<reference key="1">
    <citation type="journal article" date="2003" name="Mol. Microbiol.">
        <title>Genome-based analysis of virulence genes in a non-biofilm-forming Staphylococcus epidermidis strain (ATCC 12228).</title>
        <authorList>
            <person name="Zhang Y.-Q."/>
            <person name="Ren S.-X."/>
            <person name="Li H.-L."/>
            <person name="Wang Y.-X."/>
            <person name="Fu G."/>
            <person name="Yang J."/>
            <person name="Qin Z.-Q."/>
            <person name="Miao Y.-G."/>
            <person name="Wang W.-Y."/>
            <person name="Chen R.-S."/>
            <person name="Shen Y."/>
            <person name="Chen Z."/>
            <person name="Yuan Z.-H."/>
            <person name="Zhao G.-P."/>
            <person name="Qu D."/>
            <person name="Danchin A."/>
            <person name="Wen Y.-M."/>
        </authorList>
    </citation>
    <scope>NUCLEOTIDE SEQUENCE [LARGE SCALE GENOMIC DNA]</scope>
    <source>
        <strain>ATCC 12228 / FDA PCI 1200</strain>
    </source>
</reference>
<dbReference type="EC" id="4.1.99.12" evidence="1"/>
<dbReference type="EC" id="3.5.4.25" evidence="1"/>
<dbReference type="EMBL" id="AE015929">
    <property type="protein sequence ID" value="AAO05038.1"/>
    <property type="molecule type" value="Genomic_DNA"/>
</dbReference>
<dbReference type="RefSeq" id="NP_764994.1">
    <property type="nucleotide sequence ID" value="NC_004461.1"/>
</dbReference>
<dbReference type="SMR" id="Q8CNU2"/>
<dbReference type="KEGG" id="sep:SE_1439"/>
<dbReference type="PATRIC" id="fig|176280.10.peg.1405"/>
<dbReference type="eggNOG" id="COG0108">
    <property type="taxonomic scope" value="Bacteria"/>
</dbReference>
<dbReference type="eggNOG" id="COG0807">
    <property type="taxonomic scope" value="Bacteria"/>
</dbReference>
<dbReference type="HOGENOM" id="CLU_020273_1_2_9"/>
<dbReference type="OrthoDB" id="9793111at2"/>
<dbReference type="UniPathway" id="UPA00275">
    <property type="reaction ID" value="UER00399"/>
</dbReference>
<dbReference type="UniPathway" id="UPA00275">
    <property type="reaction ID" value="UER00400"/>
</dbReference>
<dbReference type="Proteomes" id="UP000001411">
    <property type="component" value="Chromosome"/>
</dbReference>
<dbReference type="GO" id="GO:0005829">
    <property type="term" value="C:cytosol"/>
    <property type="evidence" value="ECO:0007669"/>
    <property type="project" value="TreeGrafter"/>
</dbReference>
<dbReference type="GO" id="GO:0008686">
    <property type="term" value="F:3,4-dihydroxy-2-butanone-4-phosphate synthase activity"/>
    <property type="evidence" value="ECO:0007669"/>
    <property type="project" value="UniProtKB-UniRule"/>
</dbReference>
<dbReference type="GO" id="GO:0005525">
    <property type="term" value="F:GTP binding"/>
    <property type="evidence" value="ECO:0007669"/>
    <property type="project" value="UniProtKB-KW"/>
</dbReference>
<dbReference type="GO" id="GO:0003935">
    <property type="term" value="F:GTP cyclohydrolase II activity"/>
    <property type="evidence" value="ECO:0007669"/>
    <property type="project" value="UniProtKB-UniRule"/>
</dbReference>
<dbReference type="GO" id="GO:0000287">
    <property type="term" value="F:magnesium ion binding"/>
    <property type="evidence" value="ECO:0007669"/>
    <property type="project" value="UniProtKB-UniRule"/>
</dbReference>
<dbReference type="GO" id="GO:0030145">
    <property type="term" value="F:manganese ion binding"/>
    <property type="evidence" value="ECO:0007669"/>
    <property type="project" value="UniProtKB-UniRule"/>
</dbReference>
<dbReference type="GO" id="GO:0008270">
    <property type="term" value="F:zinc ion binding"/>
    <property type="evidence" value="ECO:0007669"/>
    <property type="project" value="UniProtKB-UniRule"/>
</dbReference>
<dbReference type="GO" id="GO:0009231">
    <property type="term" value="P:riboflavin biosynthetic process"/>
    <property type="evidence" value="ECO:0007669"/>
    <property type="project" value="UniProtKB-UniRule"/>
</dbReference>
<dbReference type="CDD" id="cd00641">
    <property type="entry name" value="GTP_cyclohydro2"/>
    <property type="match status" value="1"/>
</dbReference>
<dbReference type="FunFam" id="3.40.50.10990:FF:000002">
    <property type="entry name" value="GTP cyclohydrolase-2"/>
    <property type="match status" value="1"/>
</dbReference>
<dbReference type="FunFam" id="3.90.870.10:FF:000001">
    <property type="entry name" value="Riboflavin biosynthesis protein RibBA"/>
    <property type="match status" value="1"/>
</dbReference>
<dbReference type="Gene3D" id="3.90.870.10">
    <property type="entry name" value="DHBP synthase"/>
    <property type="match status" value="1"/>
</dbReference>
<dbReference type="Gene3D" id="3.40.50.10990">
    <property type="entry name" value="GTP cyclohydrolase II"/>
    <property type="match status" value="1"/>
</dbReference>
<dbReference type="HAMAP" id="MF_00179">
    <property type="entry name" value="RibA"/>
    <property type="match status" value="1"/>
</dbReference>
<dbReference type="HAMAP" id="MF_00180">
    <property type="entry name" value="RibB"/>
    <property type="match status" value="1"/>
</dbReference>
<dbReference type="HAMAP" id="MF_01283">
    <property type="entry name" value="RibBA"/>
    <property type="match status" value="1"/>
</dbReference>
<dbReference type="InterPro" id="IPR017945">
    <property type="entry name" value="DHBP_synth_RibB-like_a/b_dom"/>
</dbReference>
<dbReference type="InterPro" id="IPR000422">
    <property type="entry name" value="DHBP_synthase_RibB"/>
</dbReference>
<dbReference type="InterPro" id="IPR032677">
    <property type="entry name" value="GTP_cyclohydro_II"/>
</dbReference>
<dbReference type="InterPro" id="IPR000926">
    <property type="entry name" value="RibA"/>
</dbReference>
<dbReference type="InterPro" id="IPR036144">
    <property type="entry name" value="RibA-like_sf"/>
</dbReference>
<dbReference type="InterPro" id="IPR016299">
    <property type="entry name" value="Riboflavin_synth_RibBA"/>
</dbReference>
<dbReference type="NCBIfam" id="NF001591">
    <property type="entry name" value="PRK00393.1"/>
    <property type="match status" value="1"/>
</dbReference>
<dbReference type="NCBIfam" id="TIGR00505">
    <property type="entry name" value="ribA"/>
    <property type="match status" value="1"/>
</dbReference>
<dbReference type="NCBIfam" id="TIGR00506">
    <property type="entry name" value="ribB"/>
    <property type="match status" value="1"/>
</dbReference>
<dbReference type="PANTHER" id="PTHR21327:SF18">
    <property type="entry name" value="3,4-DIHYDROXY-2-BUTANONE 4-PHOSPHATE SYNTHASE"/>
    <property type="match status" value="1"/>
</dbReference>
<dbReference type="PANTHER" id="PTHR21327">
    <property type="entry name" value="GTP CYCLOHYDROLASE II-RELATED"/>
    <property type="match status" value="1"/>
</dbReference>
<dbReference type="Pfam" id="PF00926">
    <property type="entry name" value="DHBP_synthase"/>
    <property type="match status" value="1"/>
</dbReference>
<dbReference type="Pfam" id="PF00925">
    <property type="entry name" value="GTP_cyclohydro2"/>
    <property type="match status" value="1"/>
</dbReference>
<dbReference type="PIRSF" id="PIRSF001259">
    <property type="entry name" value="RibA"/>
    <property type="match status" value="1"/>
</dbReference>
<dbReference type="SUPFAM" id="SSF142695">
    <property type="entry name" value="RibA-like"/>
    <property type="match status" value="1"/>
</dbReference>
<dbReference type="SUPFAM" id="SSF55821">
    <property type="entry name" value="YrdC/RibB"/>
    <property type="match status" value="1"/>
</dbReference>
<organism>
    <name type="scientific">Staphylococcus epidermidis (strain ATCC 12228 / FDA PCI 1200)</name>
    <dbReference type="NCBI Taxonomy" id="176280"/>
    <lineage>
        <taxon>Bacteria</taxon>
        <taxon>Bacillati</taxon>
        <taxon>Bacillota</taxon>
        <taxon>Bacilli</taxon>
        <taxon>Bacillales</taxon>
        <taxon>Staphylococcaceae</taxon>
        <taxon>Staphylococcus</taxon>
    </lineage>
</organism>
<keyword id="KW-0342">GTP-binding</keyword>
<keyword id="KW-0378">Hydrolase</keyword>
<keyword id="KW-0456">Lyase</keyword>
<keyword id="KW-0460">Magnesium</keyword>
<keyword id="KW-0464">Manganese</keyword>
<keyword id="KW-0479">Metal-binding</keyword>
<keyword id="KW-0511">Multifunctional enzyme</keyword>
<keyword id="KW-0547">Nucleotide-binding</keyword>
<keyword id="KW-0686">Riboflavin biosynthesis</keyword>
<keyword id="KW-0862">Zinc</keyword>
<evidence type="ECO:0000255" key="1">
    <source>
        <dbReference type="HAMAP-Rule" id="MF_01283"/>
    </source>
</evidence>
<proteinExistence type="inferred from homology"/>
<comment type="function">
    <text evidence="1">Catalyzes the conversion of D-ribulose 5-phosphate to formate and 3,4-dihydroxy-2-butanone 4-phosphate.</text>
</comment>
<comment type="function">
    <text evidence="1">Catalyzes the conversion of GTP to 2,5-diamino-6-ribosylamino-4(3H)-pyrimidinone 5'-phosphate (DARP), formate and pyrophosphate.</text>
</comment>
<comment type="catalytic activity">
    <reaction evidence="1">
        <text>D-ribulose 5-phosphate = (2S)-2-hydroxy-3-oxobutyl phosphate + formate + H(+)</text>
        <dbReference type="Rhea" id="RHEA:18457"/>
        <dbReference type="ChEBI" id="CHEBI:15378"/>
        <dbReference type="ChEBI" id="CHEBI:15740"/>
        <dbReference type="ChEBI" id="CHEBI:58121"/>
        <dbReference type="ChEBI" id="CHEBI:58830"/>
        <dbReference type="EC" id="4.1.99.12"/>
    </reaction>
</comment>
<comment type="catalytic activity">
    <reaction evidence="1">
        <text>GTP + 4 H2O = 2,5-diamino-6-hydroxy-4-(5-phosphoribosylamino)-pyrimidine + formate + 2 phosphate + 3 H(+)</text>
        <dbReference type="Rhea" id="RHEA:23704"/>
        <dbReference type="ChEBI" id="CHEBI:15377"/>
        <dbReference type="ChEBI" id="CHEBI:15378"/>
        <dbReference type="ChEBI" id="CHEBI:15740"/>
        <dbReference type="ChEBI" id="CHEBI:37565"/>
        <dbReference type="ChEBI" id="CHEBI:43474"/>
        <dbReference type="ChEBI" id="CHEBI:58614"/>
        <dbReference type="EC" id="3.5.4.25"/>
    </reaction>
</comment>
<comment type="cofactor">
    <cofactor evidence="1">
        <name>Mg(2+)</name>
        <dbReference type="ChEBI" id="CHEBI:18420"/>
    </cofactor>
    <cofactor evidence="1">
        <name>Mn(2+)</name>
        <dbReference type="ChEBI" id="CHEBI:29035"/>
    </cofactor>
    <text evidence="1">Binds 2 divalent metal cations per subunit. Magnesium or manganese.</text>
</comment>
<comment type="cofactor">
    <cofactor evidence="1">
        <name>Zn(2+)</name>
        <dbReference type="ChEBI" id="CHEBI:29105"/>
    </cofactor>
    <text evidence="1">Binds 1 zinc ion per subunit.</text>
</comment>
<comment type="pathway">
    <text evidence="1">Cofactor biosynthesis; riboflavin biosynthesis; 2-hydroxy-3-oxobutyl phosphate from D-ribulose 5-phosphate: step 1/1.</text>
</comment>
<comment type="pathway">
    <text evidence="1">Cofactor biosynthesis; riboflavin biosynthesis; 5-amino-6-(D-ribitylamino)uracil from GTP: step 1/4.</text>
</comment>
<comment type="similarity">
    <text evidence="1">In the N-terminal section; belongs to the DHBP synthase family.</text>
</comment>
<comment type="similarity">
    <text evidence="1">In the C-terminal section; belongs to the GTP cyclohydrolase II family.</text>
</comment>
<accession>Q8CNU2</accession>
<sequence length="393" mass="44263">MQFDTIELAIEALRNGESIIVVDDEDRENEGDLVAVTEWMDDNTINFMAKEGRGLICAPIDKSIAERLKLQSMEQNNTDIYGTHFTVSIDHYKTTTGISAHERTQTARALIDENTNPEDFHRPGHLFPLIAKENGVLTRNGHTEAAVDLARLTGAQPAGVICEIMNDDGTMAKGEDLQSFKERHHLKMITIKSLVAFRKAVELNVNLKAKVKMPTDFGHFDMYGFTTDYSDEEIVAIVKGDLKSNPNVRMHSACLTGDIFHSQRCDCGAQLEASMKYIDEHGGMIIYLPQEGRGIGLINKLRAYELIEKGYDTVTANLALGFDEDLRDYHVAAEILKYFDISEINLLSNNPKKFEGLEDYGIEIVDRIELIVPETQYNHSYMETKKNKMGHLI</sequence>
<gene>
    <name evidence="1" type="primary">ribBA</name>
    <name type="ordered locus">SE_1439</name>
</gene>